<geneLocation type="chloroplast"/>
<dbReference type="EC" id="7.1.1.-" evidence="1"/>
<dbReference type="EMBL" id="AP006714">
    <property type="protein sequence ID" value="BAD27365.1"/>
    <property type="molecule type" value="Genomic_DNA"/>
</dbReference>
<dbReference type="SMR" id="Q6ENP1"/>
<dbReference type="GO" id="GO:0009535">
    <property type="term" value="C:chloroplast thylakoid membrane"/>
    <property type="evidence" value="ECO:0007669"/>
    <property type="project" value="UniProtKB-SubCell"/>
</dbReference>
<dbReference type="GO" id="GO:0051287">
    <property type="term" value="F:NAD binding"/>
    <property type="evidence" value="ECO:0007669"/>
    <property type="project" value="InterPro"/>
</dbReference>
<dbReference type="GO" id="GO:0016655">
    <property type="term" value="F:oxidoreductase activity, acting on NAD(P)H, quinone or similar compound as acceptor"/>
    <property type="evidence" value="ECO:0007669"/>
    <property type="project" value="UniProtKB-UniRule"/>
</dbReference>
<dbReference type="GO" id="GO:0048038">
    <property type="term" value="F:quinone binding"/>
    <property type="evidence" value="ECO:0007669"/>
    <property type="project" value="UniProtKB-KW"/>
</dbReference>
<dbReference type="GO" id="GO:0019684">
    <property type="term" value="P:photosynthesis, light reaction"/>
    <property type="evidence" value="ECO:0007669"/>
    <property type="project" value="UniProtKB-UniRule"/>
</dbReference>
<dbReference type="Gene3D" id="1.10.645.10">
    <property type="entry name" value="Cytochrome-c3 Hydrogenase, chain B"/>
    <property type="match status" value="1"/>
</dbReference>
<dbReference type="HAMAP" id="MF_01358">
    <property type="entry name" value="NDH1_NuoD"/>
    <property type="match status" value="1"/>
</dbReference>
<dbReference type="InterPro" id="IPR001135">
    <property type="entry name" value="NADH_Q_OxRdtase_suD"/>
</dbReference>
<dbReference type="InterPro" id="IPR014029">
    <property type="entry name" value="NADH_UbQ_OxRdtase_49kDa_CS"/>
</dbReference>
<dbReference type="InterPro" id="IPR022885">
    <property type="entry name" value="NDH1_su_D/H"/>
</dbReference>
<dbReference type="InterPro" id="IPR029014">
    <property type="entry name" value="NiFe-Hase_large"/>
</dbReference>
<dbReference type="NCBIfam" id="NF004739">
    <property type="entry name" value="PRK06075.1"/>
    <property type="match status" value="1"/>
</dbReference>
<dbReference type="NCBIfam" id="NF005649">
    <property type="entry name" value="PRK07415.1"/>
    <property type="match status" value="1"/>
</dbReference>
<dbReference type="PANTHER" id="PTHR11993:SF10">
    <property type="entry name" value="NADH DEHYDROGENASE [UBIQUINONE] IRON-SULFUR PROTEIN 2, MITOCHONDRIAL"/>
    <property type="match status" value="1"/>
</dbReference>
<dbReference type="PANTHER" id="PTHR11993">
    <property type="entry name" value="NADH-UBIQUINONE OXIDOREDUCTASE 49 KDA SUBUNIT"/>
    <property type="match status" value="1"/>
</dbReference>
<dbReference type="Pfam" id="PF00346">
    <property type="entry name" value="Complex1_49kDa"/>
    <property type="match status" value="1"/>
</dbReference>
<dbReference type="SUPFAM" id="SSF56762">
    <property type="entry name" value="HydB/Nqo4-like"/>
    <property type="match status" value="1"/>
</dbReference>
<dbReference type="PROSITE" id="PS00535">
    <property type="entry name" value="COMPLEX1_49K"/>
    <property type="match status" value="1"/>
</dbReference>
<reference key="1">
    <citation type="journal article" date="2004" name="DNA Res.">
        <title>Complete nucleotide sequence of the sugarcane (Saccharum officinarum) chloroplast genome: a comparative analysis of four monocot chloroplast genomes.</title>
        <authorList>
            <person name="Asano T."/>
            <person name="Tsudzuki T."/>
            <person name="Takahashi S."/>
            <person name="Shimada H."/>
            <person name="Kadowaki K."/>
        </authorList>
    </citation>
    <scope>NUCLEOTIDE SEQUENCE [LARGE SCALE GENOMIC DNA]</scope>
</reference>
<evidence type="ECO:0000255" key="1">
    <source>
        <dbReference type="HAMAP-Rule" id="MF_01358"/>
    </source>
</evidence>
<keyword id="KW-0150">Chloroplast</keyword>
<keyword id="KW-0472">Membrane</keyword>
<keyword id="KW-0520">NAD</keyword>
<keyword id="KW-0521">NADP</keyword>
<keyword id="KW-0934">Plastid</keyword>
<keyword id="KW-0618">Plastoquinone</keyword>
<keyword id="KW-0874">Quinone</keyword>
<keyword id="KW-0793">Thylakoid</keyword>
<keyword id="KW-1278">Translocase</keyword>
<keyword id="KW-0813">Transport</keyword>
<sequence>MSLSLKRKDLMIVNMGPQHPSMHGVLRLIVTLDGEDVIDCEPILGYLHRGMEKIAENRSIIQYLPYVTRWDYLATMFTEAITVNAPEFLENIQIPQRASYIRVIMLELSRIASHLLWLGPFMADLGAQTPFFYIFRERELIYDLFEAATGMRMMHNYFRIGGVAADLPYGWMDKCLDFCDYFLQGVVEYQQLITQNPIFLERVEGVGFISGEEAVNWGLSGPMLRASGIQWDLRKIDPYESYNQFDWKVQWQKEGDSLARYLVRVGEMRESIKIIQQAVEKIPGGPYENLEARRFKKAKNPEWNDFEYRFLGKKPSPNFELSKQELYVRVEAPKGELGIYLVGDDSLFPWRWKIRPPGFINLQILPQLVKKMKLADIMTILGSIDIIMGEVDR</sequence>
<feature type="chain" id="PRO_0000226913" description="NAD(P)H-quinone oxidoreductase subunit H, chloroplastic">
    <location>
        <begin position="1"/>
        <end position="393"/>
    </location>
</feature>
<accession>Q6ENP1</accession>
<proteinExistence type="inferred from homology"/>
<comment type="function">
    <text evidence="1">NDH shuttles electrons from NAD(P)H:plastoquinone, via FMN and iron-sulfur (Fe-S) centers, to quinones in the photosynthetic chain and possibly in a chloroplast respiratory chain. The immediate electron acceptor for the enzyme in this species is believed to be plastoquinone. Couples the redox reaction to proton translocation, and thus conserves the redox energy in a proton gradient.</text>
</comment>
<comment type="catalytic activity">
    <reaction evidence="1">
        <text>a plastoquinone + NADH + (n+1) H(+)(in) = a plastoquinol + NAD(+) + n H(+)(out)</text>
        <dbReference type="Rhea" id="RHEA:42608"/>
        <dbReference type="Rhea" id="RHEA-COMP:9561"/>
        <dbReference type="Rhea" id="RHEA-COMP:9562"/>
        <dbReference type="ChEBI" id="CHEBI:15378"/>
        <dbReference type="ChEBI" id="CHEBI:17757"/>
        <dbReference type="ChEBI" id="CHEBI:57540"/>
        <dbReference type="ChEBI" id="CHEBI:57945"/>
        <dbReference type="ChEBI" id="CHEBI:62192"/>
    </reaction>
</comment>
<comment type="catalytic activity">
    <reaction evidence="1">
        <text>a plastoquinone + NADPH + (n+1) H(+)(in) = a plastoquinol + NADP(+) + n H(+)(out)</text>
        <dbReference type="Rhea" id="RHEA:42612"/>
        <dbReference type="Rhea" id="RHEA-COMP:9561"/>
        <dbReference type="Rhea" id="RHEA-COMP:9562"/>
        <dbReference type="ChEBI" id="CHEBI:15378"/>
        <dbReference type="ChEBI" id="CHEBI:17757"/>
        <dbReference type="ChEBI" id="CHEBI:57783"/>
        <dbReference type="ChEBI" id="CHEBI:58349"/>
        <dbReference type="ChEBI" id="CHEBI:62192"/>
    </reaction>
</comment>
<comment type="subunit">
    <text evidence="1">NDH is composed of at least 16 different subunits, 5 of which are encoded in the nucleus.</text>
</comment>
<comment type="subcellular location">
    <subcellularLocation>
        <location evidence="1">Plastid</location>
        <location evidence="1">Chloroplast thylakoid membrane</location>
        <topology evidence="1">Peripheral membrane protein</topology>
        <orientation evidence="1">Stromal side</orientation>
    </subcellularLocation>
</comment>
<comment type="similarity">
    <text evidence="1">Belongs to the complex I 49 kDa subunit family.</text>
</comment>
<name>NDHH_SACOF</name>
<protein>
    <recommendedName>
        <fullName evidence="1">NAD(P)H-quinone oxidoreductase subunit H, chloroplastic</fullName>
        <ecNumber evidence="1">7.1.1.-</ecNumber>
    </recommendedName>
    <alternativeName>
        <fullName>NAD(P)H dehydrogenase subunit H</fullName>
    </alternativeName>
    <alternativeName>
        <fullName evidence="1">NADH-plastoquinone oxidoreductase 49 kDa subunit</fullName>
    </alternativeName>
    <alternativeName>
        <fullName evidence="1">NADH-plastoquinone oxidoreductase subunit H</fullName>
    </alternativeName>
</protein>
<organism>
    <name type="scientific">Saccharum officinarum</name>
    <name type="common">Sugarcane</name>
    <dbReference type="NCBI Taxonomy" id="4547"/>
    <lineage>
        <taxon>Eukaryota</taxon>
        <taxon>Viridiplantae</taxon>
        <taxon>Streptophyta</taxon>
        <taxon>Embryophyta</taxon>
        <taxon>Tracheophyta</taxon>
        <taxon>Spermatophyta</taxon>
        <taxon>Magnoliopsida</taxon>
        <taxon>Liliopsida</taxon>
        <taxon>Poales</taxon>
        <taxon>Poaceae</taxon>
        <taxon>PACMAD clade</taxon>
        <taxon>Panicoideae</taxon>
        <taxon>Andropogonodae</taxon>
        <taxon>Andropogoneae</taxon>
        <taxon>Saccharinae</taxon>
        <taxon>Saccharum</taxon>
        <taxon>Saccharum officinarum species complex</taxon>
    </lineage>
</organism>
<gene>
    <name evidence="1" type="primary">ndhH</name>
</gene>